<protein>
    <recommendedName>
        <fullName evidence="1">Large ribosomal subunit protein bL36c</fullName>
    </recommendedName>
    <alternativeName>
        <fullName evidence="2">50S ribosomal protein L36, chloroplastic</fullName>
    </alternativeName>
</protein>
<gene>
    <name evidence="1" type="primary">rpl36</name>
</gene>
<keyword id="KW-0150">Chloroplast</keyword>
<keyword id="KW-0934">Plastid</keyword>
<keyword id="KW-0687">Ribonucleoprotein</keyword>
<keyword id="KW-0689">Ribosomal protein</keyword>
<feature type="chain" id="PRO_0000344775" description="Large ribosomal subunit protein bL36c">
    <location>
        <begin position="1"/>
        <end position="37"/>
    </location>
</feature>
<dbReference type="EMBL" id="EU262890">
    <property type="protein sequence ID" value="ABX10071.1"/>
    <property type="molecule type" value="Genomic_DNA"/>
</dbReference>
<dbReference type="RefSeq" id="YP_001687317.1">
    <property type="nucleotide sequence ID" value="NC_010360.2"/>
</dbReference>
<dbReference type="SMR" id="B0Z578"/>
<dbReference type="GeneID" id="5955271"/>
<dbReference type="GO" id="GO:0009507">
    <property type="term" value="C:chloroplast"/>
    <property type="evidence" value="ECO:0007669"/>
    <property type="project" value="UniProtKB-SubCell"/>
</dbReference>
<dbReference type="GO" id="GO:1990904">
    <property type="term" value="C:ribonucleoprotein complex"/>
    <property type="evidence" value="ECO:0007669"/>
    <property type="project" value="UniProtKB-KW"/>
</dbReference>
<dbReference type="GO" id="GO:0005840">
    <property type="term" value="C:ribosome"/>
    <property type="evidence" value="ECO:0007669"/>
    <property type="project" value="UniProtKB-KW"/>
</dbReference>
<dbReference type="GO" id="GO:0003735">
    <property type="term" value="F:structural constituent of ribosome"/>
    <property type="evidence" value="ECO:0007669"/>
    <property type="project" value="InterPro"/>
</dbReference>
<dbReference type="GO" id="GO:0006412">
    <property type="term" value="P:translation"/>
    <property type="evidence" value="ECO:0007669"/>
    <property type="project" value="UniProtKB-UniRule"/>
</dbReference>
<dbReference type="HAMAP" id="MF_00251">
    <property type="entry name" value="Ribosomal_bL36"/>
    <property type="match status" value="1"/>
</dbReference>
<dbReference type="InterPro" id="IPR000473">
    <property type="entry name" value="Ribosomal_bL36"/>
</dbReference>
<dbReference type="InterPro" id="IPR035977">
    <property type="entry name" value="Ribosomal_bL36_sp"/>
</dbReference>
<dbReference type="NCBIfam" id="TIGR01022">
    <property type="entry name" value="rpmJ_bact"/>
    <property type="match status" value="1"/>
</dbReference>
<dbReference type="PANTHER" id="PTHR42888">
    <property type="entry name" value="50S RIBOSOMAL PROTEIN L36, CHLOROPLASTIC"/>
    <property type="match status" value="1"/>
</dbReference>
<dbReference type="PANTHER" id="PTHR42888:SF1">
    <property type="entry name" value="LARGE RIBOSOMAL SUBUNIT PROTEIN BL36C"/>
    <property type="match status" value="1"/>
</dbReference>
<dbReference type="Pfam" id="PF00444">
    <property type="entry name" value="Ribosomal_L36"/>
    <property type="match status" value="1"/>
</dbReference>
<dbReference type="SUPFAM" id="SSF57840">
    <property type="entry name" value="Ribosomal protein L36"/>
    <property type="match status" value="1"/>
</dbReference>
<dbReference type="PROSITE" id="PS00828">
    <property type="entry name" value="RIBOSOMAL_L36"/>
    <property type="match status" value="1"/>
</dbReference>
<name>RK36_OENGL</name>
<proteinExistence type="inferred from homology"/>
<evidence type="ECO:0000255" key="1">
    <source>
        <dbReference type="HAMAP-Rule" id="MF_00251"/>
    </source>
</evidence>
<evidence type="ECO:0000305" key="2"/>
<organism>
    <name type="scientific">Oenothera glazioviana</name>
    <name type="common">Large-flowered evening primrose</name>
    <name type="synonym">Oenothera erythrosepala</name>
    <dbReference type="NCBI Taxonomy" id="482428"/>
    <lineage>
        <taxon>Eukaryota</taxon>
        <taxon>Viridiplantae</taxon>
        <taxon>Streptophyta</taxon>
        <taxon>Embryophyta</taxon>
        <taxon>Tracheophyta</taxon>
        <taxon>Spermatophyta</taxon>
        <taxon>Magnoliopsida</taxon>
        <taxon>eudicotyledons</taxon>
        <taxon>Gunneridae</taxon>
        <taxon>Pentapetalae</taxon>
        <taxon>rosids</taxon>
        <taxon>malvids</taxon>
        <taxon>Myrtales</taxon>
        <taxon>Onagraceae</taxon>
        <taxon>Onagroideae</taxon>
        <taxon>Onagreae</taxon>
        <taxon>Oenothera</taxon>
    </lineage>
</organism>
<accession>B0Z578</accession>
<geneLocation type="chloroplast"/>
<sequence length="37" mass="4432">MKIRASVRKICTKCRLIRRRGRIIVICSNPRHKQRQG</sequence>
<reference key="1">
    <citation type="journal article" date="2008" name="Nucleic Acids Res.">
        <title>The complete nucleotide sequences of the five genetically distinct plastid genomes of Oenothera, subsection Oenothera: I. Sequence evaluation and plastome evolution.</title>
        <authorList>
            <person name="Greiner S."/>
            <person name="Wang X."/>
            <person name="Rauwolf U."/>
            <person name="Silber M.V."/>
            <person name="Mayer K."/>
            <person name="Meurer J."/>
            <person name="Haberer G."/>
            <person name="Herrmann R.G."/>
        </authorList>
    </citation>
    <scope>NUCLEOTIDE SEQUENCE [LARGE SCALE GENOMIC DNA]</scope>
    <source>
        <strain>cv. Rr-lamarckiana Sweden</strain>
    </source>
</reference>
<comment type="subcellular location">
    <subcellularLocation>
        <location>Plastid</location>
        <location>Chloroplast</location>
    </subcellularLocation>
</comment>
<comment type="similarity">
    <text evidence="1">Belongs to the bacterial ribosomal protein bL36 family.</text>
</comment>